<feature type="chain" id="PRO_0000243274" description="Dephospho-CoA kinase">
    <location>
        <begin position="1"/>
        <end position="202"/>
    </location>
</feature>
<feature type="domain" description="DPCK" evidence="1">
    <location>
        <begin position="6"/>
        <end position="202"/>
    </location>
</feature>
<feature type="binding site" evidence="1">
    <location>
        <begin position="14"/>
        <end position="19"/>
    </location>
    <ligand>
        <name>ATP</name>
        <dbReference type="ChEBI" id="CHEBI:30616"/>
    </ligand>
</feature>
<name>COAE_CHLAB</name>
<protein>
    <recommendedName>
        <fullName evidence="1">Dephospho-CoA kinase</fullName>
        <ecNumber evidence="1">2.7.1.24</ecNumber>
    </recommendedName>
    <alternativeName>
        <fullName evidence="1">Dephosphocoenzyme A kinase</fullName>
    </alternativeName>
</protein>
<gene>
    <name evidence="1" type="primary">coaE</name>
    <name type="ordered locus">CAB128</name>
</gene>
<sequence>MLELLKVSITGDLSSGKTEACRVFQELGAYVISADKVSHSFLVPHSHIGRRVIDLLGPEVVIDNTFDRKVIAEKVFGNLDLLQALEAILHPEVCRIIEEQYCQVAKERKYPLFIAEVPLLYEIHYARWFDRVILITADENIRRERFTKKTNCSDLNFYQRCARFSSHEEKMMHADIVIENNGTKEELRHKVEEYFYALKGAL</sequence>
<comment type="function">
    <text evidence="1">Catalyzes the phosphorylation of the 3'-hydroxyl group of dephosphocoenzyme A to form coenzyme A.</text>
</comment>
<comment type="catalytic activity">
    <reaction evidence="1">
        <text>3'-dephospho-CoA + ATP = ADP + CoA + H(+)</text>
        <dbReference type="Rhea" id="RHEA:18245"/>
        <dbReference type="ChEBI" id="CHEBI:15378"/>
        <dbReference type="ChEBI" id="CHEBI:30616"/>
        <dbReference type="ChEBI" id="CHEBI:57287"/>
        <dbReference type="ChEBI" id="CHEBI:57328"/>
        <dbReference type="ChEBI" id="CHEBI:456216"/>
        <dbReference type="EC" id="2.7.1.24"/>
    </reaction>
</comment>
<comment type="pathway">
    <text evidence="1">Cofactor biosynthesis; coenzyme A biosynthesis; CoA from (R)-pantothenate: step 5/5.</text>
</comment>
<comment type="subcellular location">
    <subcellularLocation>
        <location evidence="1">Cytoplasm</location>
    </subcellularLocation>
</comment>
<comment type="similarity">
    <text evidence="1">Belongs to the CoaE family.</text>
</comment>
<comment type="sequence caution" evidence="2">
    <conflict type="erroneous initiation">
        <sequence resource="EMBL-CDS" id="CAH63586"/>
    </conflict>
</comment>
<reference key="1">
    <citation type="journal article" date="2005" name="Genome Res.">
        <title>The Chlamydophila abortus genome sequence reveals an array of variable proteins that contribute to interspecies variation.</title>
        <authorList>
            <person name="Thomson N.R."/>
            <person name="Yeats C."/>
            <person name="Bell K."/>
            <person name="Holden M.T.G."/>
            <person name="Bentley S.D."/>
            <person name="Livingstone M."/>
            <person name="Cerdeno-Tarraga A.-M."/>
            <person name="Harris B."/>
            <person name="Doggett J."/>
            <person name="Ormond D."/>
            <person name="Mungall K."/>
            <person name="Clarke K."/>
            <person name="Feltwell T."/>
            <person name="Hance Z."/>
            <person name="Sanders M."/>
            <person name="Quail M.A."/>
            <person name="Price C."/>
            <person name="Barrell B.G."/>
            <person name="Parkhill J."/>
            <person name="Longbottom D."/>
        </authorList>
    </citation>
    <scope>NUCLEOTIDE SEQUENCE [LARGE SCALE GENOMIC DNA]</scope>
    <source>
        <strain>DSM 27085 / S26/3</strain>
    </source>
</reference>
<evidence type="ECO:0000255" key="1">
    <source>
        <dbReference type="HAMAP-Rule" id="MF_00376"/>
    </source>
</evidence>
<evidence type="ECO:0000305" key="2"/>
<dbReference type="EC" id="2.7.1.24" evidence="1"/>
<dbReference type="EMBL" id="CR848038">
    <property type="protein sequence ID" value="CAH63586.1"/>
    <property type="status" value="ALT_INIT"/>
    <property type="molecule type" value="Genomic_DNA"/>
</dbReference>
<dbReference type="RefSeq" id="WP_041461306.1">
    <property type="nucleotide sequence ID" value="NC_004552.2"/>
</dbReference>
<dbReference type="SMR" id="Q5L6Y4"/>
<dbReference type="GeneID" id="93024678"/>
<dbReference type="KEGG" id="cab:CAB128"/>
<dbReference type="eggNOG" id="COG0237">
    <property type="taxonomic scope" value="Bacteria"/>
</dbReference>
<dbReference type="HOGENOM" id="CLU_057180_3_1_0"/>
<dbReference type="OrthoDB" id="17745at2"/>
<dbReference type="UniPathway" id="UPA00241">
    <property type="reaction ID" value="UER00356"/>
</dbReference>
<dbReference type="Proteomes" id="UP000001012">
    <property type="component" value="Chromosome"/>
</dbReference>
<dbReference type="GO" id="GO:0005737">
    <property type="term" value="C:cytoplasm"/>
    <property type="evidence" value="ECO:0007669"/>
    <property type="project" value="UniProtKB-SubCell"/>
</dbReference>
<dbReference type="GO" id="GO:0005524">
    <property type="term" value="F:ATP binding"/>
    <property type="evidence" value="ECO:0007669"/>
    <property type="project" value="UniProtKB-UniRule"/>
</dbReference>
<dbReference type="GO" id="GO:0004140">
    <property type="term" value="F:dephospho-CoA kinase activity"/>
    <property type="evidence" value="ECO:0007669"/>
    <property type="project" value="UniProtKB-UniRule"/>
</dbReference>
<dbReference type="GO" id="GO:0015937">
    <property type="term" value="P:coenzyme A biosynthetic process"/>
    <property type="evidence" value="ECO:0007669"/>
    <property type="project" value="UniProtKB-UniRule"/>
</dbReference>
<dbReference type="CDD" id="cd02022">
    <property type="entry name" value="DPCK"/>
    <property type="match status" value="1"/>
</dbReference>
<dbReference type="Gene3D" id="3.40.50.300">
    <property type="entry name" value="P-loop containing nucleotide triphosphate hydrolases"/>
    <property type="match status" value="1"/>
</dbReference>
<dbReference type="HAMAP" id="MF_00376">
    <property type="entry name" value="Dephospho_CoA_kinase"/>
    <property type="match status" value="1"/>
</dbReference>
<dbReference type="InterPro" id="IPR001977">
    <property type="entry name" value="Depp_CoAkinase"/>
</dbReference>
<dbReference type="InterPro" id="IPR027417">
    <property type="entry name" value="P-loop_NTPase"/>
</dbReference>
<dbReference type="NCBIfam" id="TIGR00152">
    <property type="entry name" value="dephospho-CoA kinase"/>
    <property type="match status" value="1"/>
</dbReference>
<dbReference type="PANTHER" id="PTHR10695:SF46">
    <property type="entry name" value="BIFUNCTIONAL COENZYME A SYNTHASE-RELATED"/>
    <property type="match status" value="1"/>
</dbReference>
<dbReference type="PANTHER" id="PTHR10695">
    <property type="entry name" value="DEPHOSPHO-COA KINASE-RELATED"/>
    <property type="match status" value="1"/>
</dbReference>
<dbReference type="Pfam" id="PF01121">
    <property type="entry name" value="CoaE"/>
    <property type="match status" value="1"/>
</dbReference>
<dbReference type="SUPFAM" id="SSF52540">
    <property type="entry name" value="P-loop containing nucleoside triphosphate hydrolases"/>
    <property type="match status" value="1"/>
</dbReference>
<dbReference type="PROSITE" id="PS51219">
    <property type="entry name" value="DPCK"/>
    <property type="match status" value="1"/>
</dbReference>
<keyword id="KW-0067">ATP-binding</keyword>
<keyword id="KW-0173">Coenzyme A biosynthesis</keyword>
<keyword id="KW-0963">Cytoplasm</keyword>
<keyword id="KW-0418">Kinase</keyword>
<keyword id="KW-0547">Nucleotide-binding</keyword>
<keyword id="KW-0808">Transferase</keyword>
<proteinExistence type="inferred from homology"/>
<organism>
    <name type="scientific">Chlamydia abortus (strain DSM 27085 / S26/3)</name>
    <name type="common">Chlamydophila abortus</name>
    <dbReference type="NCBI Taxonomy" id="218497"/>
    <lineage>
        <taxon>Bacteria</taxon>
        <taxon>Pseudomonadati</taxon>
        <taxon>Chlamydiota</taxon>
        <taxon>Chlamydiia</taxon>
        <taxon>Chlamydiales</taxon>
        <taxon>Chlamydiaceae</taxon>
        <taxon>Chlamydia/Chlamydophila group</taxon>
        <taxon>Chlamydia</taxon>
    </lineage>
</organism>
<accession>Q5L6Y4</accession>